<evidence type="ECO:0000255" key="1">
    <source>
        <dbReference type="HAMAP-Rule" id="MF_00494"/>
    </source>
</evidence>
<keyword id="KW-0963">Cytoplasm</keyword>
<keyword id="KW-0570">Pentose shunt</keyword>
<keyword id="KW-0704">Schiff base</keyword>
<keyword id="KW-0808">Transferase</keyword>
<proteinExistence type="inferred from homology"/>
<name>TAL_STREM</name>
<accession>B4U4L6</accession>
<protein>
    <recommendedName>
        <fullName evidence="1">Probable transaldolase</fullName>
        <ecNumber evidence="1">2.2.1.2</ecNumber>
    </recommendedName>
</protein>
<organism>
    <name type="scientific">Streptococcus equi subsp. zooepidemicus (strain MGCS10565)</name>
    <dbReference type="NCBI Taxonomy" id="552526"/>
    <lineage>
        <taxon>Bacteria</taxon>
        <taxon>Bacillati</taxon>
        <taxon>Bacillota</taxon>
        <taxon>Bacilli</taxon>
        <taxon>Lactobacillales</taxon>
        <taxon>Streptococcaceae</taxon>
        <taxon>Streptococcus</taxon>
    </lineage>
</organism>
<gene>
    <name evidence="1" type="primary">tal</name>
    <name type="ordered locus">Sez_1602</name>
</gene>
<feature type="chain" id="PRO_1000126359" description="Probable transaldolase">
    <location>
        <begin position="1"/>
        <end position="214"/>
    </location>
</feature>
<feature type="active site" description="Schiff-base intermediate with substrate" evidence="1">
    <location>
        <position position="83"/>
    </location>
</feature>
<sequence>MKFFLDTANVEAIRAINELGVVDGVTTNPSIISREGRDFETVIKEICEIVDGPISAEVTGLTAEEMIAEARSIAKWHDNVVVKIPMTTEGLKATNVLSQEGIKTNVTLIFTVSQGLMAMKAGATYISPFIGRLEDIGADPYQLISDLRGIIDLYGFQAEIIAASIRTAAHVEAVAQLGAHIATIPDPLFAKMTEHPLTTNGLKTFMEDWASFKK</sequence>
<comment type="function">
    <text evidence="1">Transaldolase is important for the balance of metabolites in the pentose-phosphate pathway.</text>
</comment>
<comment type="catalytic activity">
    <reaction evidence="1">
        <text>D-sedoheptulose 7-phosphate + D-glyceraldehyde 3-phosphate = D-erythrose 4-phosphate + beta-D-fructose 6-phosphate</text>
        <dbReference type="Rhea" id="RHEA:17053"/>
        <dbReference type="ChEBI" id="CHEBI:16897"/>
        <dbReference type="ChEBI" id="CHEBI:57483"/>
        <dbReference type="ChEBI" id="CHEBI:57634"/>
        <dbReference type="ChEBI" id="CHEBI:59776"/>
        <dbReference type="EC" id="2.2.1.2"/>
    </reaction>
</comment>
<comment type="pathway">
    <text evidence="1">Carbohydrate degradation; pentose phosphate pathway; D-glyceraldehyde 3-phosphate and beta-D-fructose 6-phosphate from D-ribose 5-phosphate and D-xylulose 5-phosphate (non-oxidative stage): step 2/3.</text>
</comment>
<comment type="subcellular location">
    <subcellularLocation>
        <location evidence="1">Cytoplasm</location>
    </subcellularLocation>
</comment>
<comment type="similarity">
    <text evidence="1">Belongs to the transaldolase family. Type 3B subfamily.</text>
</comment>
<reference key="1">
    <citation type="journal article" date="2008" name="PLoS ONE">
        <title>Genome sequence of a lancefield group C Streptococcus zooepidemicus strain causing epidemic nephritis: new information about an old disease.</title>
        <authorList>
            <person name="Beres S.B."/>
            <person name="Sesso R."/>
            <person name="Pinto S.W.L."/>
            <person name="Hoe N.P."/>
            <person name="Porcella S.F."/>
            <person name="Deleo F.R."/>
            <person name="Musser J.M."/>
        </authorList>
    </citation>
    <scope>NUCLEOTIDE SEQUENCE [LARGE SCALE GENOMIC DNA]</scope>
    <source>
        <strain>MGCS10565</strain>
    </source>
</reference>
<dbReference type="EC" id="2.2.1.2" evidence="1"/>
<dbReference type="EMBL" id="CP001129">
    <property type="protein sequence ID" value="ACG62933.1"/>
    <property type="molecule type" value="Genomic_DNA"/>
</dbReference>
<dbReference type="SMR" id="B4U4L6"/>
<dbReference type="KEGG" id="sez:Sez_1602"/>
<dbReference type="HOGENOM" id="CLU_079764_0_0_9"/>
<dbReference type="UniPathway" id="UPA00115">
    <property type="reaction ID" value="UER00414"/>
</dbReference>
<dbReference type="Proteomes" id="UP000001873">
    <property type="component" value="Chromosome"/>
</dbReference>
<dbReference type="GO" id="GO:0005737">
    <property type="term" value="C:cytoplasm"/>
    <property type="evidence" value="ECO:0007669"/>
    <property type="project" value="UniProtKB-SubCell"/>
</dbReference>
<dbReference type="GO" id="GO:0016832">
    <property type="term" value="F:aldehyde-lyase activity"/>
    <property type="evidence" value="ECO:0007669"/>
    <property type="project" value="InterPro"/>
</dbReference>
<dbReference type="GO" id="GO:0004801">
    <property type="term" value="F:transaldolase activity"/>
    <property type="evidence" value="ECO:0007669"/>
    <property type="project" value="UniProtKB-UniRule"/>
</dbReference>
<dbReference type="GO" id="GO:0005975">
    <property type="term" value="P:carbohydrate metabolic process"/>
    <property type="evidence" value="ECO:0007669"/>
    <property type="project" value="InterPro"/>
</dbReference>
<dbReference type="GO" id="GO:0006098">
    <property type="term" value="P:pentose-phosphate shunt"/>
    <property type="evidence" value="ECO:0007669"/>
    <property type="project" value="UniProtKB-UniRule"/>
</dbReference>
<dbReference type="CDD" id="cd00956">
    <property type="entry name" value="Transaldolase_FSA"/>
    <property type="match status" value="1"/>
</dbReference>
<dbReference type="FunFam" id="3.20.20.70:FF:000018">
    <property type="entry name" value="Probable transaldolase"/>
    <property type="match status" value="1"/>
</dbReference>
<dbReference type="Gene3D" id="3.20.20.70">
    <property type="entry name" value="Aldolase class I"/>
    <property type="match status" value="1"/>
</dbReference>
<dbReference type="HAMAP" id="MF_00494">
    <property type="entry name" value="Transaldolase_3b"/>
    <property type="match status" value="1"/>
</dbReference>
<dbReference type="InterPro" id="IPR013785">
    <property type="entry name" value="Aldolase_TIM"/>
</dbReference>
<dbReference type="InterPro" id="IPR001585">
    <property type="entry name" value="TAL/FSA"/>
</dbReference>
<dbReference type="InterPro" id="IPR022999">
    <property type="entry name" value="Transaldolase_3B"/>
</dbReference>
<dbReference type="InterPro" id="IPR004731">
    <property type="entry name" value="Transaldolase_3B/F6P_aldolase"/>
</dbReference>
<dbReference type="InterPro" id="IPR018225">
    <property type="entry name" value="Transaldolase_AS"/>
</dbReference>
<dbReference type="InterPro" id="IPR033919">
    <property type="entry name" value="TSA/FSA_arc/bac"/>
</dbReference>
<dbReference type="NCBIfam" id="TIGR00875">
    <property type="entry name" value="fsa_talC_mipB"/>
    <property type="match status" value="1"/>
</dbReference>
<dbReference type="PANTHER" id="PTHR10683">
    <property type="entry name" value="TRANSALDOLASE"/>
    <property type="match status" value="1"/>
</dbReference>
<dbReference type="PANTHER" id="PTHR10683:SF36">
    <property type="entry name" value="TRANSALDOLASE"/>
    <property type="match status" value="1"/>
</dbReference>
<dbReference type="Pfam" id="PF00923">
    <property type="entry name" value="TAL_FSA"/>
    <property type="match status" value="1"/>
</dbReference>
<dbReference type="SUPFAM" id="SSF51569">
    <property type="entry name" value="Aldolase"/>
    <property type="match status" value="1"/>
</dbReference>
<dbReference type="PROSITE" id="PS01054">
    <property type="entry name" value="TRANSALDOLASE_1"/>
    <property type="match status" value="1"/>
</dbReference>
<dbReference type="PROSITE" id="PS00958">
    <property type="entry name" value="TRANSALDOLASE_2"/>
    <property type="match status" value="1"/>
</dbReference>